<proteinExistence type="inferred from homology"/>
<evidence type="ECO:0000255" key="1">
    <source>
        <dbReference type="HAMAP-Rule" id="MF_00222"/>
    </source>
</evidence>
<feature type="chain" id="PRO_0000136008" description="Shikimate dehydrogenase (NADP(+))">
    <location>
        <begin position="1"/>
        <end position="266"/>
    </location>
</feature>
<feature type="active site" description="Proton acceptor" evidence="1">
    <location>
        <position position="69"/>
    </location>
</feature>
<feature type="binding site" evidence="1">
    <location>
        <begin position="16"/>
        <end position="18"/>
    </location>
    <ligand>
        <name>shikimate</name>
        <dbReference type="ChEBI" id="CHEBI:36208"/>
    </ligand>
</feature>
<feature type="binding site" evidence="1">
    <location>
        <position position="65"/>
    </location>
    <ligand>
        <name>shikimate</name>
        <dbReference type="ChEBI" id="CHEBI:36208"/>
    </ligand>
</feature>
<feature type="binding site" evidence="1">
    <location>
        <position position="90"/>
    </location>
    <ligand>
        <name>shikimate</name>
        <dbReference type="ChEBI" id="CHEBI:36208"/>
    </ligand>
</feature>
<feature type="binding site" evidence="1">
    <location>
        <position position="105"/>
    </location>
    <ligand>
        <name>shikimate</name>
        <dbReference type="ChEBI" id="CHEBI:36208"/>
    </ligand>
</feature>
<feature type="binding site" evidence="1">
    <location>
        <begin position="128"/>
        <end position="132"/>
    </location>
    <ligand>
        <name>NADP(+)</name>
        <dbReference type="ChEBI" id="CHEBI:58349"/>
    </ligand>
</feature>
<feature type="binding site" evidence="1">
    <location>
        <position position="211"/>
    </location>
    <ligand>
        <name>NADP(+)</name>
        <dbReference type="ChEBI" id="CHEBI:58349"/>
    </ligand>
</feature>
<feature type="binding site" evidence="1">
    <location>
        <position position="213"/>
    </location>
    <ligand>
        <name>shikimate</name>
        <dbReference type="ChEBI" id="CHEBI:36208"/>
    </ligand>
</feature>
<feature type="binding site" evidence="1">
    <location>
        <position position="233"/>
    </location>
    <ligand>
        <name>NADP(+)</name>
        <dbReference type="ChEBI" id="CHEBI:58349"/>
    </ligand>
</feature>
<protein>
    <recommendedName>
        <fullName evidence="1">Shikimate dehydrogenase (NADP(+))</fullName>
        <shortName evidence="1">SDH</shortName>
        <ecNumber evidence="1">1.1.1.25</ecNumber>
    </recommendedName>
</protein>
<dbReference type="EC" id="1.1.1.25" evidence="1"/>
<dbReference type="EMBL" id="AE001439">
    <property type="protein sequence ID" value="AAD06744.1"/>
    <property type="molecule type" value="Genomic_DNA"/>
</dbReference>
<dbReference type="PIR" id="A71841">
    <property type="entry name" value="A71841"/>
</dbReference>
<dbReference type="RefSeq" id="WP_000769596.1">
    <property type="nucleotide sequence ID" value="NC_000921.1"/>
</dbReference>
<dbReference type="SMR" id="Q9ZJX8"/>
<dbReference type="KEGG" id="hpj:jhp_1170"/>
<dbReference type="PATRIC" id="fig|85963.30.peg.1402"/>
<dbReference type="eggNOG" id="COG0169">
    <property type="taxonomic scope" value="Bacteria"/>
</dbReference>
<dbReference type="UniPathway" id="UPA00053">
    <property type="reaction ID" value="UER00087"/>
</dbReference>
<dbReference type="Proteomes" id="UP000000804">
    <property type="component" value="Chromosome"/>
</dbReference>
<dbReference type="GO" id="GO:0005829">
    <property type="term" value="C:cytosol"/>
    <property type="evidence" value="ECO:0007669"/>
    <property type="project" value="TreeGrafter"/>
</dbReference>
<dbReference type="GO" id="GO:0050661">
    <property type="term" value="F:NADP binding"/>
    <property type="evidence" value="ECO:0007669"/>
    <property type="project" value="InterPro"/>
</dbReference>
<dbReference type="GO" id="GO:0004764">
    <property type="term" value="F:shikimate 3-dehydrogenase (NADP+) activity"/>
    <property type="evidence" value="ECO:0007669"/>
    <property type="project" value="UniProtKB-UniRule"/>
</dbReference>
<dbReference type="GO" id="GO:0008652">
    <property type="term" value="P:amino acid biosynthetic process"/>
    <property type="evidence" value="ECO:0007669"/>
    <property type="project" value="UniProtKB-KW"/>
</dbReference>
<dbReference type="GO" id="GO:0009073">
    <property type="term" value="P:aromatic amino acid family biosynthetic process"/>
    <property type="evidence" value="ECO:0007669"/>
    <property type="project" value="UniProtKB-KW"/>
</dbReference>
<dbReference type="GO" id="GO:0009423">
    <property type="term" value="P:chorismate biosynthetic process"/>
    <property type="evidence" value="ECO:0007669"/>
    <property type="project" value="UniProtKB-UniRule"/>
</dbReference>
<dbReference type="GO" id="GO:0019632">
    <property type="term" value="P:shikimate metabolic process"/>
    <property type="evidence" value="ECO:0007669"/>
    <property type="project" value="InterPro"/>
</dbReference>
<dbReference type="CDD" id="cd01065">
    <property type="entry name" value="NAD_bind_Shikimate_DH"/>
    <property type="match status" value="1"/>
</dbReference>
<dbReference type="FunFam" id="3.40.50.10860:FF:000025">
    <property type="entry name" value="Shikimate dehydrogenase (NADP(+))"/>
    <property type="match status" value="1"/>
</dbReference>
<dbReference type="Gene3D" id="3.40.50.10860">
    <property type="entry name" value="Leucine Dehydrogenase, chain A, domain 1"/>
    <property type="match status" value="1"/>
</dbReference>
<dbReference type="Gene3D" id="3.40.50.720">
    <property type="entry name" value="NAD(P)-binding Rossmann-like Domain"/>
    <property type="match status" value="1"/>
</dbReference>
<dbReference type="HAMAP" id="MF_00222">
    <property type="entry name" value="Shikimate_DH_AroE"/>
    <property type="match status" value="1"/>
</dbReference>
<dbReference type="InterPro" id="IPR046346">
    <property type="entry name" value="Aminoacid_DH-like_N_sf"/>
</dbReference>
<dbReference type="InterPro" id="IPR036291">
    <property type="entry name" value="NAD(P)-bd_dom_sf"/>
</dbReference>
<dbReference type="InterPro" id="IPR011342">
    <property type="entry name" value="Shikimate_DH"/>
</dbReference>
<dbReference type="InterPro" id="IPR013708">
    <property type="entry name" value="Shikimate_DH-bd_N"/>
</dbReference>
<dbReference type="InterPro" id="IPR022893">
    <property type="entry name" value="Shikimate_DH_fam"/>
</dbReference>
<dbReference type="NCBIfam" id="TIGR00507">
    <property type="entry name" value="aroE"/>
    <property type="match status" value="1"/>
</dbReference>
<dbReference type="NCBIfam" id="NF001316">
    <property type="entry name" value="PRK00258.2-5"/>
    <property type="match status" value="1"/>
</dbReference>
<dbReference type="PANTHER" id="PTHR21089:SF1">
    <property type="entry name" value="BIFUNCTIONAL 3-DEHYDROQUINATE DEHYDRATASE_SHIKIMATE DEHYDROGENASE, CHLOROPLASTIC"/>
    <property type="match status" value="1"/>
</dbReference>
<dbReference type="PANTHER" id="PTHR21089">
    <property type="entry name" value="SHIKIMATE DEHYDROGENASE"/>
    <property type="match status" value="1"/>
</dbReference>
<dbReference type="Pfam" id="PF08501">
    <property type="entry name" value="Shikimate_dh_N"/>
    <property type="match status" value="1"/>
</dbReference>
<dbReference type="SUPFAM" id="SSF53223">
    <property type="entry name" value="Aminoacid dehydrogenase-like, N-terminal domain"/>
    <property type="match status" value="1"/>
</dbReference>
<dbReference type="SUPFAM" id="SSF51735">
    <property type="entry name" value="NAD(P)-binding Rossmann-fold domains"/>
    <property type="match status" value="1"/>
</dbReference>
<comment type="function">
    <text evidence="1">Involved in the biosynthesis of the chorismate, which leads to the biosynthesis of aromatic amino acids. Catalyzes the reversible NADPH linked reduction of 3-dehydroshikimate (DHSA) to yield shikimate (SA).</text>
</comment>
<comment type="catalytic activity">
    <reaction evidence="1">
        <text>shikimate + NADP(+) = 3-dehydroshikimate + NADPH + H(+)</text>
        <dbReference type="Rhea" id="RHEA:17737"/>
        <dbReference type="ChEBI" id="CHEBI:15378"/>
        <dbReference type="ChEBI" id="CHEBI:16630"/>
        <dbReference type="ChEBI" id="CHEBI:36208"/>
        <dbReference type="ChEBI" id="CHEBI:57783"/>
        <dbReference type="ChEBI" id="CHEBI:58349"/>
        <dbReference type="EC" id="1.1.1.25"/>
    </reaction>
</comment>
<comment type="pathway">
    <text evidence="1">Metabolic intermediate biosynthesis; chorismate biosynthesis; chorismate from D-erythrose 4-phosphate and phosphoenolpyruvate: step 4/7.</text>
</comment>
<comment type="subunit">
    <text evidence="1">Homodimer.</text>
</comment>
<comment type="similarity">
    <text evidence="1">Belongs to the shikimate dehydrogenase family.</text>
</comment>
<accession>Q9ZJX8</accession>
<reference key="1">
    <citation type="journal article" date="1999" name="Nature">
        <title>Genomic sequence comparison of two unrelated isolates of the human gastric pathogen Helicobacter pylori.</title>
        <authorList>
            <person name="Alm R.A."/>
            <person name="Ling L.-S.L."/>
            <person name="Moir D.T."/>
            <person name="King B.L."/>
            <person name="Brown E.D."/>
            <person name="Doig P.C."/>
            <person name="Smith D.R."/>
            <person name="Noonan B."/>
            <person name="Guild B.C."/>
            <person name="deJonge B.L."/>
            <person name="Carmel G."/>
            <person name="Tummino P.J."/>
            <person name="Caruso A."/>
            <person name="Uria-Nickelsen M."/>
            <person name="Mills D.M."/>
            <person name="Ives C."/>
            <person name="Gibson R."/>
            <person name="Merberg D."/>
            <person name="Mills S.D."/>
            <person name="Jiang Q."/>
            <person name="Taylor D.E."/>
            <person name="Vovis G.F."/>
            <person name="Trust T.J."/>
        </authorList>
    </citation>
    <scope>NUCLEOTIDE SEQUENCE [LARGE SCALE GENOMIC DNA]</scope>
    <source>
        <strain>J99 / ATCC 700824</strain>
    </source>
</reference>
<name>AROE_HELPJ</name>
<organism>
    <name type="scientific">Helicobacter pylori (strain J99 / ATCC 700824)</name>
    <name type="common">Campylobacter pylori J99</name>
    <dbReference type="NCBI Taxonomy" id="85963"/>
    <lineage>
        <taxon>Bacteria</taxon>
        <taxon>Pseudomonadati</taxon>
        <taxon>Campylobacterota</taxon>
        <taxon>Epsilonproteobacteria</taxon>
        <taxon>Campylobacterales</taxon>
        <taxon>Helicobacteraceae</taxon>
        <taxon>Helicobacter</taxon>
    </lineage>
</organism>
<gene>
    <name evidence="1" type="primary">aroE</name>
    <name type="ordered locus">jhp_1170</name>
</gene>
<sequence length="266" mass="29644">MKLKSFGVFGNPIKHSKSPLIHNACFLTFQKELGFLGHYHPILLPLESRIKNEFLHLGLSGANVTLPFKERAFQICDKIKGIALECASVNTLVLENDELVGYNTDALGFYLSLKHQNYQNDQNALILGAGGSAKALACGLQKQGLKVSVLNRSARGLDFFQRLGCDCFMEPPKSAFDLIINATSASLHNELPLNKEVLKGYFKESKLAYDLAYGFLTPFLSLAKELKIPFQDGKDMLIYQASLSFEKFSDSQIPYSKAFEVMRSVF</sequence>
<keyword id="KW-0028">Amino-acid biosynthesis</keyword>
<keyword id="KW-0057">Aromatic amino acid biosynthesis</keyword>
<keyword id="KW-0521">NADP</keyword>
<keyword id="KW-0560">Oxidoreductase</keyword>